<reference key="1">
    <citation type="journal article" date="2003" name="J. Bacteriol.">
        <title>Comparative analyses of the complete genome sequences of Pierce's disease and citrus variegated chlorosis strains of Xylella fastidiosa.</title>
        <authorList>
            <person name="Van Sluys M.A."/>
            <person name="de Oliveira M.C."/>
            <person name="Monteiro-Vitorello C.B."/>
            <person name="Miyaki C.Y."/>
            <person name="Furlan L.R."/>
            <person name="Camargo L.E.A."/>
            <person name="da Silva A.C.R."/>
            <person name="Moon D.H."/>
            <person name="Takita M.A."/>
            <person name="Lemos E.G.M."/>
            <person name="Machado M.A."/>
            <person name="Ferro M.I.T."/>
            <person name="da Silva F.R."/>
            <person name="Goldman M.H.S."/>
            <person name="Goldman G.H."/>
            <person name="Lemos M.V.F."/>
            <person name="El-Dorry H."/>
            <person name="Tsai S.M."/>
            <person name="Carrer H."/>
            <person name="Carraro D.M."/>
            <person name="de Oliveira R.C."/>
            <person name="Nunes L.R."/>
            <person name="Siqueira W.J."/>
            <person name="Coutinho L.L."/>
            <person name="Kimura E.T."/>
            <person name="Ferro E.S."/>
            <person name="Harakava R."/>
            <person name="Kuramae E.E."/>
            <person name="Marino C.L."/>
            <person name="Giglioti E."/>
            <person name="Abreu I.L."/>
            <person name="Alves L.M.C."/>
            <person name="do Amaral A.M."/>
            <person name="Baia G.S."/>
            <person name="Blanco S.R."/>
            <person name="Brito M.S."/>
            <person name="Cannavan F.S."/>
            <person name="Celestino A.V."/>
            <person name="da Cunha A.F."/>
            <person name="Fenille R.C."/>
            <person name="Ferro J.A."/>
            <person name="Formighieri E.F."/>
            <person name="Kishi L.T."/>
            <person name="Leoni S.G."/>
            <person name="Oliveira A.R."/>
            <person name="Rosa V.E. Jr."/>
            <person name="Sassaki F.T."/>
            <person name="Sena J.A.D."/>
            <person name="de Souza A.A."/>
            <person name="Truffi D."/>
            <person name="Tsukumo F."/>
            <person name="Yanai G.M."/>
            <person name="Zaros L.G."/>
            <person name="Civerolo E.L."/>
            <person name="Simpson A.J.G."/>
            <person name="Almeida N.F. Jr."/>
            <person name="Setubal J.C."/>
            <person name="Kitajima J.P."/>
        </authorList>
    </citation>
    <scope>NUCLEOTIDE SEQUENCE [LARGE SCALE GENOMIC DNA]</scope>
    <source>
        <strain>Temecula1 / ATCC 700964</strain>
    </source>
</reference>
<comment type="function">
    <text evidence="1">Cell wall formation. Adds enolpyruvyl to UDP-N-acetylglucosamine.</text>
</comment>
<comment type="catalytic activity">
    <reaction evidence="1">
        <text>phosphoenolpyruvate + UDP-N-acetyl-alpha-D-glucosamine = UDP-N-acetyl-3-O-(1-carboxyvinyl)-alpha-D-glucosamine + phosphate</text>
        <dbReference type="Rhea" id="RHEA:18681"/>
        <dbReference type="ChEBI" id="CHEBI:43474"/>
        <dbReference type="ChEBI" id="CHEBI:57705"/>
        <dbReference type="ChEBI" id="CHEBI:58702"/>
        <dbReference type="ChEBI" id="CHEBI:68483"/>
        <dbReference type="EC" id="2.5.1.7"/>
    </reaction>
</comment>
<comment type="pathway">
    <text evidence="1">Cell wall biogenesis; peptidoglycan biosynthesis.</text>
</comment>
<comment type="subcellular location">
    <subcellularLocation>
        <location evidence="1">Cytoplasm</location>
    </subcellularLocation>
</comment>
<comment type="similarity">
    <text evidence="1">Belongs to the EPSP synthase family. MurA subfamily.</text>
</comment>
<keyword id="KW-0131">Cell cycle</keyword>
<keyword id="KW-0132">Cell division</keyword>
<keyword id="KW-0133">Cell shape</keyword>
<keyword id="KW-0961">Cell wall biogenesis/degradation</keyword>
<keyword id="KW-0963">Cytoplasm</keyword>
<keyword id="KW-0573">Peptidoglycan synthesis</keyword>
<keyword id="KW-0670">Pyruvate</keyword>
<keyword id="KW-1185">Reference proteome</keyword>
<keyword id="KW-0808">Transferase</keyword>
<gene>
    <name evidence="1" type="primary">murA</name>
    <name type="ordered locus">PD_0644</name>
</gene>
<dbReference type="EC" id="2.5.1.7" evidence="1"/>
<dbReference type="EMBL" id="AE009442">
    <property type="protein sequence ID" value="AAO28515.1"/>
    <property type="molecule type" value="Genomic_DNA"/>
</dbReference>
<dbReference type="RefSeq" id="WP_004089202.1">
    <property type="nucleotide sequence ID" value="NC_004556.1"/>
</dbReference>
<dbReference type="SMR" id="Q87DN8"/>
<dbReference type="GeneID" id="93904422"/>
<dbReference type="KEGG" id="xft:PD_0644"/>
<dbReference type="HOGENOM" id="CLU_027387_0_0_6"/>
<dbReference type="UniPathway" id="UPA00219"/>
<dbReference type="Proteomes" id="UP000002516">
    <property type="component" value="Chromosome"/>
</dbReference>
<dbReference type="GO" id="GO:0005737">
    <property type="term" value="C:cytoplasm"/>
    <property type="evidence" value="ECO:0007669"/>
    <property type="project" value="UniProtKB-SubCell"/>
</dbReference>
<dbReference type="GO" id="GO:0008760">
    <property type="term" value="F:UDP-N-acetylglucosamine 1-carboxyvinyltransferase activity"/>
    <property type="evidence" value="ECO:0007669"/>
    <property type="project" value="UniProtKB-UniRule"/>
</dbReference>
<dbReference type="GO" id="GO:0051301">
    <property type="term" value="P:cell division"/>
    <property type="evidence" value="ECO:0007669"/>
    <property type="project" value="UniProtKB-KW"/>
</dbReference>
<dbReference type="GO" id="GO:0071555">
    <property type="term" value="P:cell wall organization"/>
    <property type="evidence" value="ECO:0007669"/>
    <property type="project" value="UniProtKB-KW"/>
</dbReference>
<dbReference type="GO" id="GO:0009252">
    <property type="term" value="P:peptidoglycan biosynthetic process"/>
    <property type="evidence" value="ECO:0007669"/>
    <property type="project" value="UniProtKB-UniRule"/>
</dbReference>
<dbReference type="GO" id="GO:0008360">
    <property type="term" value="P:regulation of cell shape"/>
    <property type="evidence" value="ECO:0007669"/>
    <property type="project" value="UniProtKB-KW"/>
</dbReference>
<dbReference type="GO" id="GO:0019277">
    <property type="term" value="P:UDP-N-acetylgalactosamine biosynthetic process"/>
    <property type="evidence" value="ECO:0007669"/>
    <property type="project" value="InterPro"/>
</dbReference>
<dbReference type="CDD" id="cd01555">
    <property type="entry name" value="UdpNAET"/>
    <property type="match status" value="1"/>
</dbReference>
<dbReference type="FunFam" id="3.65.10.10:FF:000002">
    <property type="entry name" value="UDP-N-acetylglucosamine 1-carboxyvinyltransferase"/>
    <property type="match status" value="1"/>
</dbReference>
<dbReference type="Gene3D" id="3.65.10.10">
    <property type="entry name" value="Enolpyruvate transferase domain"/>
    <property type="match status" value="2"/>
</dbReference>
<dbReference type="HAMAP" id="MF_00111">
    <property type="entry name" value="MurA"/>
    <property type="match status" value="1"/>
</dbReference>
<dbReference type="InterPro" id="IPR001986">
    <property type="entry name" value="Enolpyruvate_Tfrase_dom"/>
</dbReference>
<dbReference type="InterPro" id="IPR036968">
    <property type="entry name" value="Enolpyruvate_Tfrase_sf"/>
</dbReference>
<dbReference type="InterPro" id="IPR050068">
    <property type="entry name" value="MurA_subfamily"/>
</dbReference>
<dbReference type="InterPro" id="IPR013792">
    <property type="entry name" value="RNA3'P_cycl/enolpyr_Trfase_a/b"/>
</dbReference>
<dbReference type="InterPro" id="IPR005750">
    <property type="entry name" value="UDP_GlcNAc_COvinyl_MurA"/>
</dbReference>
<dbReference type="NCBIfam" id="TIGR01072">
    <property type="entry name" value="murA"/>
    <property type="match status" value="1"/>
</dbReference>
<dbReference type="NCBIfam" id="NF006873">
    <property type="entry name" value="PRK09369.1"/>
    <property type="match status" value="1"/>
</dbReference>
<dbReference type="PANTHER" id="PTHR43783">
    <property type="entry name" value="UDP-N-ACETYLGLUCOSAMINE 1-CARBOXYVINYLTRANSFERASE"/>
    <property type="match status" value="1"/>
</dbReference>
<dbReference type="PANTHER" id="PTHR43783:SF1">
    <property type="entry name" value="UDP-N-ACETYLGLUCOSAMINE 1-CARBOXYVINYLTRANSFERASE"/>
    <property type="match status" value="1"/>
</dbReference>
<dbReference type="Pfam" id="PF00275">
    <property type="entry name" value="EPSP_synthase"/>
    <property type="match status" value="1"/>
</dbReference>
<dbReference type="SUPFAM" id="SSF55205">
    <property type="entry name" value="EPT/RTPC-like"/>
    <property type="match status" value="1"/>
</dbReference>
<sequence length="425" mass="45153">MSKIVVAGGTPLYGDVRISGAKNAVLPILCATLLADAPVEISNVPYLHDVITMINLLRELGAGVTMNEGIEAKGRSITIDPRWVRQRVVPYDLVKTMRASVLLLGPLLACYGAAEVALPGGCAIGSRPVDQHIRGLQSLGAEITVENGYIKASVSQGRLKGGRFVFDVVSVTGTENLLMAAAVAQGTSVIENAAMEPEVVDLAECLITLGARVEGAGTPRIVVEGVERLNSGQYAVLPDRIETGTFLVATAMTGGRISMQQVRPQTLDAVLGKLTEAGACIEIGADSIRLDMQGRRPCSVNLTTAPYPGFPTDMQAQFMALNCVAEGVGVIKETIFENRFMHVDELLRLGAKIQIEGHTAIVQGVERLSGAPVMATDLRASASLILAGLVAEGETIIDRIYHLDRGYENIERKLGVLGASIRRMT</sequence>
<accession>Q87DN8</accession>
<evidence type="ECO:0000255" key="1">
    <source>
        <dbReference type="HAMAP-Rule" id="MF_00111"/>
    </source>
</evidence>
<proteinExistence type="inferred from homology"/>
<protein>
    <recommendedName>
        <fullName evidence="1">UDP-N-acetylglucosamine 1-carboxyvinyltransferase</fullName>
        <ecNumber evidence="1">2.5.1.7</ecNumber>
    </recommendedName>
    <alternativeName>
        <fullName evidence="1">Enoylpyruvate transferase</fullName>
    </alternativeName>
    <alternativeName>
        <fullName evidence="1">UDP-N-acetylglucosamine enolpyruvyl transferase</fullName>
        <shortName evidence="1">EPT</shortName>
    </alternativeName>
</protein>
<feature type="chain" id="PRO_0000178956" description="UDP-N-acetylglucosamine 1-carboxyvinyltransferase">
    <location>
        <begin position="1"/>
        <end position="425"/>
    </location>
</feature>
<feature type="active site" description="Proton donor" evidence="1">
    <location>
        <position position="122"/>
    </location>
</feature>
<feature type="binding site" evidence="1">
    <location>
        <begin position="22"/>
        <end position="23"/>
    </location>
    <ligand>
        <name>phosphoenolpyruvate</name>
        <dbReference type="ChEBI" id="CHEBI:58702"/>
    </ligand>
</feature>
<feature type="binding site" evidence="1">
    <location>
        <position position="98"/>
    </location>
    <ligand>
        <name>UDP-N-acetyl-alpha-D-glucosamine</name>
        <dbReference type="ChEBI" id="CHEBI:57705"/>
    </ligand>
</feature>
<feature type="binding site" evidence="1">
    <location>
        <begin position="127"/>
        <end position="131"/>
    </location>
    <ligand>
        <name>UDP-N-acetyl-alpha-D-glucosamine</name>
        <dbReference type="ChEBI" id="CHEBI:57705"/>
    </ligand>
</feature>
<feature type="binding site" evidence="1">
    <location>
        <position position="313"/>
    </location>
    <ligand>
        <name>UDP-N-acetyl-alpha-D-glucosamine</name>
        <dbReference type="ChEBI" id="CHEBI:57705"/>
    </ligand>
</feature>
<feature type="binding site" evidence="1">
    <location>
        <position position="335"/>
    </location>
    <ligand>
        <name>UDP-N-acetyl-alpha-D-glucosamine</name>
        <dbReference type="ChEBI" id="CHEBI:57705"/>
    </ligand>
</feature>
<feature type="modified residue" description="2-(S-cysteinyl)pyruvic acid O-phosphothioketal" evidence="1">
    <location>
        <position position="122"/>
    </location>
</feature>
<name>MURA_XYLFT</name>
<organism>
    <name type="scientific">Xylella fastidiosa (strain Temecula1 / ATCC 700964)</name>
    <dbReference type="NCBI Taxonomy" id="183190"/>
    <lineage>
        <taxon>Bacteria</taxon>
        <taxon>Pseudomonadati</taxon>
        <taxon>Pseudomonadota</taxon>
        <taxon>Gammaproteobacteria</taxon>
        <taxon>Lysobacterales</taxon>
        <taxon>Lysobacteraceae</taxon>
        <taxon>Xylella</taxon>
    </lineage>
</organism>